<comment type="function">
    <text evidence="7 8 10 13">DNA-dependent RNA polymerase catalyzes the transcription of mitochondrial DNA into RNA using the four ribonucleoside triphosphates as substrates (PubMed:21278163, PubMed:33602924). Component of the mitochondrial transcription initiation complex, composed at least of TFB2M, TFAM and POLRMT that is required for basal transcription of mitochondrial DNA (PubMed:29149603). In this complex, TFAM recruits POLRMT to a specific promoter whereas TFB2M induces structural changes in POLRMT to enable promoter opening and trapping of the DNA non-template strand (PubMed:29149603). Has DNA primase activity (PubMed:18685103, PubMed:33602924). Catalyzes the synthesis of short RNA primers that are necessary for the initiation of lagging-strand DNA synthesis from the origin of light-strand DNA replication (OriL) (PubMed:18685103, PubMed:33602924).</text>
</comment>
<comment type="catalytic activity">
    <reaction evidence="3 4">
        <text>RNA(n) + a ribonucleoside 5'-triphosphate = RNA(n+1) + diphosphate</text>
        <dbReference type="Rhea" id="RHEA:21248"/>
        <dbReference type="Rhea" id="RHEA-COMP:14527"/>
        <dbReference type="Rhea" id="RHEA-COMP:17342"/>
        <dbReference type="ChEBI" id="CHEBI:33019"/>
        <dbReference type="ChEBI" id="CHEBI:61557"/>
        <dbReference type="ChEBI" id="CHEBI:140395"/>
        <dbReference type="EC" id="2.7.7.6"/>
    </reaction>
</comment>
<comment type="subunit">
    <text evidence="6 8 9 10 11 12">Homodimer (PubMed:29149603). Component of the mitochondrial transcription initiation complex, composed at least of TFB2M, TFAM and POLRMT (PubMed:29149603). In this complex TFAM recruits POLRMT to the promoter whereas TFB2M induces structural changes in POLRMT to enable promoter opening and trapping of the DNA non-template strand (PubMed:29149603). Upon metabolic stress, forms a complex composed of FOXO3, SIRT3 and mitochondrial RNA polymerase POLRMT; the complex is recruited to mtDNA in a SIRT3-dependent manner (PubMed:23283301). Also forms a complex composed of FOXO3, SIRT3, TFAM and POLRMT (PubMed:29445193). Interacts with TFB1M and TFB2M, leading to the stimulation of transcription (PubMed:12068295). Interacts with TEFM (PubMed:21278163). Interacts with MTRES1 (PubMed:31226201).</text>
</comment>
<comment type="interaction">
    <interactant intactId="EBI-355145">
        <id>O00411</id>
    </interactant>
    <interactant intactId="EBI-358272">
        <id>P52815</id>
        <label>MRPL12</label>
    </interactant>
    <organismsDiffer>false</organismsDiffer>
    <experiments>7</experiments>
</comment>
<comment type="interaction">
    <interactant intactId="EBI-355145">
        <id>O00411</id>
    </interactant>
    <interactant intactId="EBI-725550">
        <id>Q96QE5</id>
        <label>TEFM</label>
    </interactant>
    <organismsDiffer>false</organismsDiffer>
    <experiments>6</experiments>
</comment>
<comment type="subcellular location">
    <subcellularLocation>
        <location evidence="9 11">Mitochondrion</location>
    </subcellularLocation>
</comment>
<comment type="disease" evidence="13">
    <disease id="DI-06333">
        <name>Combined oxidative phosphorylation deficiency 55</name>
        <acronym>COXPD55</acronym>
        <description>A mitochondrial disease characterized by global developmental delay, hypotonia, short stature, and impaired intellectual development with speech disabilities in childhood. Indolent progressive external ophthalmoplegia may be present in some patients. COXPD55 transmission pattern is consistent with autosomal dominant inheritance in some families, and with autosomal recessive inheritance in others.</description>
        <dbReference type="MIM" id="619743"/>
    </disease>
    <text>The disease is caused by variants affecting the gene represented in this entry.</text>
</comment>
<comment type="similarity">
    <text evidence="14">Belongs to the phage and mitochondrial RNA polymerase family.</text>
</comment>
<reference key="1">
    <citation type="journal article" date="1997" name="Hum. Mol. Genet.">
        <title>Identification of the gene encoding the human mitochondrial RNA polymerase (h-mtRPOL) by cyberscreening of the Expressed Sequence Tags database.</title>
        <authorList>
            <person name="Tiranti V."/>
            <person name="Savoia A."/>
            <person name="Forti F."/>
            <person name="D'Apolito M.F."/>
            <person name="Centra M."/>
            <person name="Rocchi M."/>
            <person name="Zeviani M."/>
        </authorList>
    </citation>
    <scope>NUCLEOTIDE SEQUENCE [MRNA]</scope>
    <source>
        <tissue>Liver</tissue>
    </source>
</reference>
<reference key="2">
    <citation type="journal article" date="2004" name="Nature">
        <title>The DNA sequence and biology of human chromosome 19.</title>
        <authorList>
            <person name="Grimwood J."/>
            <person name="Gordon L.A."/>
            <person name="Olsen A.S."/>
            <person name="Terry A."/>
            <person name="Schmutz J."/>
            <person name="Lamerdin J.E."/>
            <person name="Hellsten U."/>
            <person name="Goodstein D."/>
            <person name="Couronne O."/>
            <person name="Tran-Gyamfi M."/>
            <person name="Aerts A."/>
            <person name="Altherr M."/>
            <person name="Ashworth L."/>
            <person name="Bajorek E."/>
            <person name="Black S."/>
            <person name="Branscomb E."/>
            <person name="Caenepeel S."/>
            <person name="Carrano A.V."/>
            <person name="Caoile C."/>
            <person name="Chan Y.M."/>
            <person name="Christensen M."/>
            <person name="Cleland C.A."/>
            <person name="Copeland A."/>
            <person name="Dalin E."/>
            <person name="Dehal P."/>
            <person name="Denys M."/>
            <person name="Detter J.C."/>
            <person name="Escobar J."/>
            <person name="Flowers D."/>
            <person name="Fotopulos D."/>
            <person name="Garcia C."/>
            <person name="Georgescu A.M."/>
            <person name="Glavina T."/>
            <person name="Gomez M."/>
            <person name="Gonzales E."/>
            <person name="Groza M."/>
            <person name="Hammon N."/>
            <person name="Hawkins T."/>
            <person name="Haydu L."/>
            <person name="Ho I."/>
            <person name="Huang W."/>
            <person name="Israni S."/>
            <person name="Jett J."/>
            <person name="Kadner K."/>
            <person name="Kimball H."/>
            <person name="Kobayashi A."/>
            <person name="Larionov V."/>
            <person name="Leem S.-H."/>
            <person name="Lopez F."/>
            <person name="Lou Y."/>
            <person name="Lowry S."/>
            <person name="Malfatti S."/>
            <person name="Martinez D."/>
            <person name="McCready P.M."/>
            <person name="Medina C."/>
            <person name="Morgan J."/>
            <person name="Nelson K."/>
            <person name="Nolan M."/>
            <person name="Ovcharenko I."/>
            <person name="Pitluck S."/>
            <person name="Pollard M."/>
            <person name="Popkie A.P."/>
            <person name="Predki P."/>
            <person name="Quan G."/>
            <person name="Ramirez L."/>
            <person name="Rash S."/>
            <person name="Retterer J."/>
            <person name="Rodriguez A."/>
            <person name="Rogers S."/>
            <person name="Salamov A."/>
            <person name="Salazar A."/>
            <person name="She X."/>
            <person name="Smith D."/>
            <person name="Slezak T."/>
            <person name="Solovyev V."/>
            <person name="Thayer N."/>
            <person name="Tice H."/>
            <person name="Tsai M."/>
            <person name="Ustaszewska A."/>
            <person name="Vo N."/>
            <person name="Wagner M."/>
            <person name="Wheeler J."/>
            <person name="Wu K."/>
            <person name="Xie G."/>
            <person name="Yang J."/>
            <person name="Dubchak I."/>
            <person name="Furey T.S."/>
            <person name="DeJong P."/>
            <person name="Dickson M."/>
            <person name="Gordon D."/>
            <person name="Eichler E.E."/>
            <person name="Pennacchio L.A."/>
            <person name="Richardson P."/>
            <person name="Stubbs L."/>
            <person name="Rokhsar D.S."/>
            <person name="Myers R.M."/>
            <person name="Rubin E.M."/>
            <person name="Lucas S.M."/>
        </authorList>
    </citation>
    <scope>NUCLEOTIDE SEQUENCE [LARGE SCALE GENOMIC DNA]</scope>
</reference>
<reference key="3">
    <citation type="journal article" date="2002" name="Nat. Genet.">
        <title>Mitochondrial transcription factors B1 and B2 activate transcription of human mtDNA.</title>
        <authorList>
            <person name="Falkenberg M."/>
            <person name="Gaspari M."/>
            <person name="Rantanen A."/>
            <person name="Trifunovic A."/>
            <person name="Larsson N.-G."/>
            <person name="Gustafsson C.M."/>
        </authorList>
    </citation>
    <scope>INTERACTION WITH TFB1M AND TFB2M</scope>
</reference>
<reference key="4">
    <citation type="journal article" date="2008" name="Proc. Natl. Acad. Sci. U.S.A.">
        <title>Human mitochondrial RNA polymerase primes lagging-strand DNA synthesis in vitro.</title>
        <authorList>
            <person name="Wanrooij S."/>
            <person name="Fuste J.M."/>
            <person name="Farge G."/>
            <person name="Shi Y."/>
            <person name="Gustafsson C.M."/>
            <person name="Falkenberg M."/>
        </authorList>
    </citation>
    <scope>FUNCTION</scope>
</reference>
<reference key="5">
    <citation type="journal article" date="2011" name="BMC Syst. Biol.">
        <title>Initial characterization of the human central proteome.</title>
        <authorList>
            <person name="Burkard T.R."/>
            <person name="Planyavsky M."/>
            <person name="Kaupe I."/>
            <person name="Breitwieser F.P."/>
            <person name="Buerckstuemmer T."/>
            <person name="Bennett K.L."/>
            <person name="Superti-Furga G."/>
            <person name="Colinge J."/>
        </authorList>
    </citation>
    <scope>IDENTIFICATION BY MASS SPECTROMETRY [LARGE SCALE ANALYSIS]</scope>
</reference>
<reference key="6">
    <citation type="journal article" date="2011" name="Nucleic Acids Res.">
        <title>TEFM (c17orf42) is necessary for transcription of human mtDNA.</title>
        <authorList>
            <person name="Minczuk M."/>
            <person name="He J."/>
            <person name="Duch A.M."/>
            <person name="Ettema T.J."/>
            <person name="Chlebowski A."/>
            <person name="Dzionek K."/>
            <person name="Nijtmans L.G."/>
            <person name="Huynen M.A."/>
            <person name="Holt I.J."/>
        </authorList>
    </citation>
    <scope>FUNCTION</scope>
    <scope>INTERACTION WITH TEFM</scope>
</reference>
<reference key="7">
    <citation type="journal article" date="2013" name="Cell. Mol. Life Sci.">
        <title>A novel AMPK-dependent FoxO3A-SIRT3 intramitochondrial complex sensing glucose levels.</title>
        <authorList>
            <person name="Peserico A."/>
            <person name="Chiacchiera F."/>
            <person name="Grossi V."/>
            <person name="Matrone A."/>
            <person name="Latorre D."/>
            <person name="Simonatto M."/>
            <person name="Fusella A."/>
            <person name="Ryall J.G."/>
            <person name="Finley L.W."/>
            <person name="Haigis M.C."/>
            <person name="Villani G."/>
            <person name="Puri P.L."/>
            <person name="Sartorelli V."/>
            <person name="Simone C."/>
        </authorList>
    </citation>
    <scope>IDENTIFICATION IN A COMPLEX WITH SIRT3 AND FOXO3</scope>
    <scope>SUBCELLULAR LOCATION</scope>
</reference>
<reference key="8">
    <citation type="journal article" date="2015" name="Proteomics">
        <title>N-terminome analysis of the human mitochondrial proteome.</title>
        <authorList>
            <person name="Vaca Jacome A.S."/>
            <person name="Rabilloud T."/>
            <person name="Schaeffer-Reiss C."/>
            <person name="Rompais M."/>
            <person name="Ayoub D."/>
            <person name="Lane L."/>
            <person name="Bairoch A."/>
            <person name="Van Dorsselaer A."/>
            <person name="Carapito C."/>
        </authorList>
    </citation>
    <scope>IDENTIFICATION BY MASS SPECTROMETRY [LARGE SCALE ANALYSIS]</scope>
</reference>
<reference key="9">
    <citation type="journal article" date="2018" name="Cell Death Dis.">
        <title>Uncoupling FoxO3A mitochondrial and nuclear functions in cancer cells undergoing metabolic stress and chemotherapy.</title>
        <authorList>
            <person name="Celestini V."/>
            <person name="Tezil T."/>
            <person name="Russo L."/>
            <person name="Fasano C."/>
            <person name="Sanese P."/>
            <person name="Forte G."/>
            <person name="Peserico A."/>
            <person name="Lepore Signorile M."/>
            <person name="Longo G."/>
            <person name="De Rasmo D."/>
            <person name="Signorile A."/>
            <person name="Gadaleta R.M."/>
            <person name="Scialpi N."/>
            <person name="Terao M."/>
            <person name="Garattini E."/>
            <person name="Cocco T."/>
            <person name="Villani G."/>
            <person name="Moschetta A."/>
            <person name="Grossi V."/>
            <person name="Simone C."/>
        </authorList>
    </citation>
    <scope>IDENTIFICATION IN A COMPLEX WITH SIRT3; TFAM AND FOXO3</scope>
    <scope>SUBCELLULAR LOCATION</scope>
</reference>
<reference key="10">
    <citation type="journal article" date="2019" name="Nucleic Acids Res.">
        <title>Quantitative proteomics revealed C6orf203/MTRES1 as a factor preventing stress-induced transcription deficiency in human mitochondria.</title>
        <authorList>
            <person name="Kotrys A.V."/>
            <person name="Cysewski D."/>
            <person name="Czarnomska S.D."/>
            <person name="Pietras Z."/>
            <person name="Borowski L.S."/>
            <person name="Dziembowski A."/>
            <person name="Szczesny R.J."/>
        </authorList>
    </citation>
    <scope>INTERACTION WITH MTRES1</scope>
</reference>
<reference evidence="16 17" key="11">
    <citation type="journal article" date="2017" name="Cell">
        <title>Structural Basis of Mitochondrial Transcription Initiation.</title>
        <authorList>
            <person name="Hillen H.S."/>
            <person name="Morozov Y.I."/>
            <person name="Sarfallah A."/>
            <person name="Temiakov D."/>
            <person name="Cramer P."/>
        </authorList>
    </citation>
    <scope>X-RAY CRYSTALLOGRAPHY (4.50 ANGSTROMS) OF 43-245 IN COMPLEX WITH TFAM; TFB2M AND DNA</scope>
    <scope>SUBUNIT</scope>
</reference>
<reference key="12">
    <citation type="journal article" date="2021" name="Nat. Commun.">
        <title>POLRMT mutations impair mitochondrial transcription causing neurological disease.</title>
        <authorList>
            <person name="Olahova M."/>
            <person name="Peter B."/>
            <person name="Szilagyi Z."/>
            <person name="Diaz-Maldonado H."/>
            <person name="Singh M."/>
            <person name="Sommerville E.W."/>
            <person name="Blakely E.L."/>
            <person name="Collier J.J."/>
            <person name="Hoberg E."/>
            <person name="Stranecky V."/>
            <person name="Hartmannova H."/>
            <person name="Bleyer A.J."/>
            <person name="McBride K.L."/>
            <person name="Bowden S.A."/>
            <person name="Korandova Z."/>
            <person name="Pecinova A."/>
            <person name="Ropers H.H."/>
            <person name="Kahrizi K."/>
            <person name="Najmabadi H."/>
            <person name="Tarnopolsky M.A."/>
            <person name="Brady L.I."/>
            <person name="Weaver K.N."/>
            <person name="Prada C.E."/>
            <person name="Ounap K."/>
            <person name="Wojcik M.H."/>
            <person name="Pajusalu S."/>
            <person name="Syeda S.B."/>
            <person name="Pais L."/>
            <person name="Estrella E.A."/>
            <person name="Bruels C.C."/>
            <person name="Kunkel L.M."/>
            <person name="Kang P.B."/>
            <person name="Bonnen P.E."/>
            <person name="Mracek T."/>
            <person name="Kmoch S."/>
            <person name="Gorman G.S."/>
            <person name="Falkenberg M."/>
            <person name="Gustafsson C.M."/>
            <person name="Taylor R.W."/>
        </authorList>
    </citation>
    <scope>VARIANTS COXPD55 149-GLN--SER-1230 DEL; ASP-250; SER-566; PHE-611; LEU-641; 742-PRO--PRO-747 DEL; SER-810; ASN-870; 925-CYS--SER-1230 DEL; CYS-1013 AND PHE-1193</scope>
    <scope>CHARACTERIZATION OF VARIANTS COXPD55 ASP-250; PHE-611; LEU-641; 742-PRO--PRO-747 DEL; SER-810; ASN-870 AND CYS-1013</scope>
    <scope>INVOLVEMENT IN COXPD55</scope>
    <scope>FUNCTION</scope>
</reference>
<keyword id="KW-0002">3D-structure</keyword>
<keyword id="KW-0225">Disease variant</keyword>
<keyword id="KW-0240">DNA-directed RNA polymerase</keyword>
<keyword id="KW-0496">Mitochondrion</keyword>
<keyword id="KW-0548">Nucleotidyltransferase</keyword>
<keyword id="KW-1274">Primary mitochondrial disease</keyword>
<keyword id="KW-1267">Proteomics identification</keyword>
<keyword id="KW-1185">Reference proteome</keyword>
<keyword id="KW-0804">Transcription</keyword>
<keyword id="KW-0808">Transferase</keyword>
<keyword id="KW-0809">Transit peptide</keyword>
<accession>O00411</accession>
<accession>O60370</accession>
<protein>
    <recommendedName>
        <fullName evidence="14">DNA-directed RNA polymerase, mitochondrial</fullName>
        <shortName>MtRPOL</shortName>
        <ecNumber>2.7.7.6</ecNumber>
    </recommendedName>
</protein>
<evidence type="ECO:0000250" key="1"/>
<evidence type="ECO:0000255" key="2"/>
<evidence type="ECO:0000255" key="3">
    <source>
        <dbReference type="PROSITE-ProRule" id="PRU10031"/>
    </source>
</evidence>
<evidence type="ECO:0000255" key="4">
    <source>
        <dbReference type="PROSITE-ProRule" id="PRU10032"/>
    </source>
</evidence>
<evidence type="ECO:0000256" key="5">
    <source>
        <dbReference type="SAM" id="MobiDB-lite"/>
    </source>
</evidence>
<evidence type="ECO:0000269" key="6">
    <source>
    </source>
</evidence>
<evidence type="ECO:0000269" key="7">
    <source>
    </source>
</evidence>
<evidence type="ECO:0000269" key="8">
    <source>
    </source>
</evidence>
<evidence type="ECO:0000269" key="9">
    <source>
    </source>
</evidence>
<evidence type="ECO:0000269" key="10">
    <source>
    </source>
</evidence>
<evidence type="ECO:0000269" key="11">
    <source>
    </source>
</evidence>
<evidence type="ECO:0000269" key="12">
    <source>
    </source>
</evidence>
<evidence type="ECO:0000269" key="13">
    <source>
    </source>
</evidence>
<evidence type="ECO:0000305" key="14"/>
<evidence type="ECO:0000312" key="15">
    <source>
        <dbReference type="HGNC" id="HGNC:9200"/>
    </source>
</evidence>
<evidence type="ECO:0007744" key="16">
    <source>
        <dbReference type="PDB" id="6ERP"/>
    </source>
</evidence>
<evidence type="ECO:0007744" key="17">
    <source>
        <dbReference type="PDB" id="6ERQ"/>
    </source>
</evidence>
<evidence type="ECO:0007829" key="18">
    <source>
        <dbReference type="PDB" id="3SPA"/>
    </source>
</evidence>
<evidence type="ECO:0007829" key="19">
    <source>
        <dbReference type="PDB" id="4BOC"/>
    </source>
</evidence>
<evidence type="ECO:0007829" key="20">
    <source>
        <dbReference type="PDB" id="7A8P"/>
    </source>
</evidence>
<evidence type="ECO:0007829" key="21">
    <source>
        <dbReference type="PDB" id="7PZR"/>
    </source>
</evidence>
<evidence type="ECO:0007829" key="22">
    <source>
        <dbReference type="PDB" id="9BDC"/>
    </source>
</evidence>
<name>RPOM_HUMAN</name>
<dbReference type="EC" id="2.7.7.6"/>
<dbReference type="EMBL" id="U75370">
    <property type="protein sequence ID" value="AAB58255.1"/>
    <property type="molecule type" value="mRNA"/>
</dbReference>
<dbReference type="EMBL" id="AC004449">
    <property type="protein sequence ID" value="AAC06147.1"/>
    <property type="molecule type" value="Genomic_DNA"/>
</dbReference>
<dbReference type="CCDS" id="CCDS12036.1"/>
<dbReference type="RefSeq" id="NP_005026.3">
    <property type="nucleotide sequence ID" value="NM_005035.3"/>
</dbReference>
<dbReference type="PDB" id="3SPA">
    <property type="method" value="X-ray"/>
    <property type="resolution" value="2.50 A"/>
    <property type="chains" value="A=105-1230"/>
</dbReference>
<dbReference type="PDB" id="4BOC">
    <property type="method" value="X-ray"/>
    <property type="resolution" value="2.65 A"/>
    <property type="chains" value="A=151-1230"/>
</dbReference>
<dbReference type="PDB" id="5OLA">
    <property type="method" value="X-ray"/>
    <property type="resolution" value="3.90 A"/>
    <property type="chains" value="E/F=151-1230"/>
</dbReference>
<dbReference type="PDB" id="6ERP">
    <property type="method" value="X-ray"/>
    <property type="resolution" value="4.50 A"/>
    <property type="chains" value="A/B=105-1230"/>
</dbReference>
<dbReference type="PDB" id="6ERQ">
    <property type="method" value="X-ray"/>
    <property type="resolution" value="4.50 A"/>
    <property type="chains" value="A/B=105-1230"/>
</dbReference>
<dbReference type="PDB" id="7A8P">
    <property type="method" value="EM"/>
    <property type="resolution" value="3.50 A"/>
    <property type="chains" value="A=105-1230"/>
</dbReference>
<dbReference type="PDB" id="7PZP">
    <property type="method" value="EM"/>
    <property type="resolution" value="3.50 A"/>
    <property type="chains" value="A/B=41-1230"/>
</dbReference>
<dbReference type="PDB" id="7PZR">
    <property type="method" value="EM"/>
    <property type="resolution" value="3.00 A"/>
    <property type="chains" value="A=40-1230"/>
</dbReference>
<dbReference type="PDB" id="7ZC4">
    <property type="method" value="EM"/>
    <property type="resolution" value="3.24 A"/>
    <property type="chains" value="A=40-1230"/>
</dbReference>
<dbReference type="PDB" id="8U8U">
    <property type="method" value="EM"/>
    <property type="resolution" value="2.90 A"/>
    <property type="chains" value="E=120-1230"/>
</dbReference>
<dbReference type="PDB" id="8U8V">
    <property type="method" value="EM"/>
    <property type="resolution" value="2.74 A"/>
    <property type="chains" value="E=120-1230"/>
</dbReference>
<dbReference type="PDB" id="9BDC">
    <property type="method" value="EM"/>
    <property type="resolution" value="2.54 A"/>
    <property type="chains" value="E=120-1230"/>
</dbReference>
<dbReference type="PDB" id="9BDD">
    <property type="method" value="EM"/>
    <property type="resolution" value="2.86 A"/>
    <property type="chains" value="E=120-1230"/>
</dbReference>
<dbReference type="PDBsum" id="3SPA"/>
<dbReference type="PDBsum" id="4BOC"/>
<dbReference type="PDBsum" id="5OLA"/>
<dbReference type="PDBsum" id="6ERP"/>
<dbReference type="PDBsum" id="6ERQ"/>
<dbReference type="PDBsum" id="7A8P"/>
<dbReference type="PDBsum" id="7PZP"/>
<dbReference type="PDBsum" id="7PZR"/>
<dbReference type="PDBsum" id="7ZC4"/>
<dbReference type="PDBsum" id="8U8U"/>
<dbReference type="PDBsum" id="8U8V"/>
<dbReference type="PDBsum" id="9BDC"/>
<dbReference type="PDBsum" id="9BDD"/>
<dbReference type="EMDB" id="EMD-11679"/>
<dbReference type="EMDB" id="EMD-13735"/>
<dbReference type="EMDB" id="EMD-13736"/>
<dbReference type="EMDB" id="EMD-13796"/>
<dbReference type="EMDB" id="EMD-14619"/>
<dbReference type="EMDB" id="EMD-42027"/>
<dbReference type="EMDB" id="EMD-42028"/>
<dbReference type="EMDB" id="EMD-44448"/>
<dbReference type="EMDB" id="EMD-44449"/>
<dbReference type="SMR" id="O00411"/>
<dbReference type="BioGRID" id="111438">
    <property type="interactions" value="238"/>
</dbReference>
<dbReference type="ComplexPortal" id="CPX-7241">
    <property type="entry name" value="Mitochondrial transcription initiation complex"/>
</dbReference>
<dbReference type="DIP" id="DIP-56412N"/>
<dbReference type="FunCoup" id="O00411">
    <property type="interactions" value="1704"/>
</dbReference>
<dbReference type="IntAct" id="O00411">
    <property type="interactions" value="121"/>
</dbReference>
<dbReference type="MINT" id="O00411"/>
<dbReference type="STRING" id="9606.ENSP00000465759"/>
<dbReference type="BindingDB" id="O00411"/>
<dbReference type="ChEMBL" id="CHEMBL3120041"/>
<dbReference type="iPTMnet" id="O00411"/>
<dbReference type="MetOSite" id="O00411"/>
<dbReference type="PhosphoSitePlus" id="O00411"/>
<dbReference type="SwissPalm" id="O00411"/>
<dbReference type="BioMuta" id="POLRMT"/>
<dbReference type="jPOST" id="O00411"/>
<dbReference type="MassIVE" id="O00411"/>
<dbReference type="PaxDb" id="9606-ENSP00000465759"/>
<dbReference type="PeptideAtlas" id="O00411"/>
<dbReference type="ProteomicsDB" id="47875"/>
<dbReference type="Pumba" id="O00411"/>
<dbReference type="Antibodypedia" id="1270">
    <property type="antibodies" value="105 antibodies from 29 providers"/>
</dbReference>
<dbReference type="DNASU" id="5442"/>
<dbReference type="Ensembl" id="ENST00000588649.7">
    <property type="protein sequence ID" value="ENSP00000465759.2"/>
    <property type="gene ID" value="ENSG00000099821.14"/>
</dbReference>
<dbReference type="GeneID" id="5442"/>
<dbReference type="KEGG" id="hsa:5442"/>
<dbReference type="MANE-Select" id="ENST00000588649.7">
    <property type="protein sequence ID" value="ENSP00000465759.2"/>
    <property type="RefSeq nucleotide sequence ID" value="NM_005035.4"/>
    <property type="RefSeq protein sequence ID" value="NP_005026.3"/>
</dbReference>
<dbReference type="UCSC" id="uc002lpf.2">
    <property type="organism name" value="human"/>
</dbReference>
<dbReference type="AGR" id="HGNC:9200"/>
<dbReference type="CTD" id="5442"/>
<dbReference type="DisGeNET" id="5442"/>
<dbReference type="GeneCards" id="POLRMT"/>
<dbReference type="HGNC" id="HGNC:9200">
    <property type="gene designation" value="POLRMT"/>
</dbReference>
<dbReference type="HPA" id="ENSG00000099821">
    <property type="expression patterns" value="Low tissue specificity"/>
</dbReference>
<dbReference type="MalaCards" id="POLRMT"/>
<dbReference type="MIM" id="601778">
    <property type="type" value="gene"/>
</dbReference>
<dbReference type="MIM" id="619743">
    <property type="type" value="phenotype"/>
</dbReference>
<dbReference type="neXtProt" id="NX_O00411"/>
<dbReference type="OpenTargets" id="ENSG00000099821"/>
<dbReference type="PharmGKB" id="PA33522"/>
<dbReference type="VEuPathDB" id="HostDB:ENSG00000099821"/>
<dbReference type="eggNOG" id="KOG1038">
    <property type="taxonomic scope" value="Eukaryota"/>
</dbReference>
<dbReference type="GeneTree" id="ENSGT00390000008060"/>
<dbReference type="HOGENOM" id="CLU_003364_2_1_1"/>
<dbReference type="InParanoid" id="O00411"/>
<dbReference type="OMA" id="WWAKSDE"/>
<dbReference type="OrthoDB" id="276422at2759"/>
<dbReference type="PAN-GO" id="O00411">
    <property type="GO annotations" value="4 GO annotations based on evolutionary models"/>
</dbReference>
<dbReference type="PhylomeDB" id="O00411"/>
<dbReference type="TreeFam" id="TF105700"/>
<dbReference type="BRENDA" id="2.7.7.6">
    <property type="organism ID" value="2681"/>
</dbReference>
<dbReference type="PathwayCommons" id="O00411"/>
<dbReference type="Reactome" id="R-HSA-163282">
    <property type="pathway name" value="Mitochondrial transcription initiation"/>
</dbReference>
<dbReference type="Reactome" id="R-HSA-2151201">
    <property type="pathway name" value="Transcriptional activation of mitochondrial biogenesis"/>
</dbReference>
<dbReference type="Reactome" id="R-HSA-9913635">
    <property type="pathway name" value="Strand-asynchronous mitochondrial DNA replication"/>
</dbReference>
<dbReference type="SignaLink" id="O00411"/>
<dbReference type="BioGRID-ORCS" id="5442">
    <property type="hits" value="483 hits in 1174 CRISPR screens"/>
</dbReference>
<dbReference type="CD-CODE" id="232F8A39">
    <property type="entry name" value="P-body"/>
</dbReference>
<dbReference type="CD-CODE" id="5965E019">
    <property type="entry name" value="mtRNA granule"/>
</dbReference>
<dbReference type="ChiTaRS" id="POLRMT">
    <property type="organism name" value="human"/>
</dbReference>
<dbReference type="EvolutionaryTrace" id="O00411"/>
<dbReference type="GeneWiki" id="POLRMT"/>
<dbReference type="GenomeRNAi" id="5442"/>
<dbReference type="Pharos" id="O00411">
    <property type="development level" value="Tbio"/>
</dbReference>
<dbReference type="PRO" id="PR:O00411"/>
<dbReference type="Proteomes" id="UP000005640">
    <property type="component" value="Chromosome 19"/>
</dbReference>
<dbReference type="RNAct" id="O00411">
    <property type="molecule type" value="protein"/>
</dbReference>
<dbReference type="Bgee" id="ENSG00000099821">
    <property type="expression patterns" value="Expressed in left testis and 165 other cell types or tissues"/>
</dbReference>
<dbReference type="ExpressionAtlas" id="O00411">
    <property type="expression patterns" value="baseline and differential"/>
</dbReference>
<dbReference type="GO" id="GO:0034245">
    <property type="term" value="C:mitochondrial DNA-directed RNA polymerase complex"/>
    <property type="evidence" value="ECO:0000318"/>
    <property type="project" value="GO_Central"/>
</dbReference>
<dbReference type="GO" id="GO:0005759">
    <property type="term" value="C:mitochondrial matrix"/>
    <property type="evidence" value="ECO:0000314"/>
    <property type="project" value="UniProtKB"/>
</dbReference>
<dbReference type="GO" id="GO:0042645">
    <property type="term" value="C:mitochondrial nucleoid"/>
    <property type="evidence" value="ECO:0000314"/>
    <property type="project" value="BHF-UCL"/>
</dbReference>
<dbReference type="GO" id="GO:0005739">
    <property type="term" value="C:mitochondrion"/>
    <property type="evidence" value="ECO:0000314"/>
    <property type="project" value="HGNC-UCL"/>
</dbReference>
<dbReference type="GO" id="GO:0032991">
    <property type="term" value="C:protein-containing complex"/>
    <property type="evidence" value="ECO:0000314"/>
    <property type="project" value="UniProtKB"/>
</dbReference>
<dbReference type="GO" id="GO:0000175">
    <property type="term" value="F:3'-5'-RNA exonuclease activity"/>
    <property type="evidence" value="ECO:0000314"/>
    <property type="project" value="FlyBase"/>
</dbReference>
<dbReference type="GO" id="GO:0003899">
    <property type="term" value="F:DNA-directed RNA polymerase activity"/>
    <property type="evidence" value="ECO:0000314"/>
    <property type="project" value="UniProtKB"/>
</dbReference>
<dbReference type="GO" id="GO:0001018">
    <property type="term" value="F:mitochondrial promoter sequence-specific DNA binding"/>
    <property type="evidence" value="ECO:0000318"/>
    <property type="project" value="GO_Central"/>
</dbReference>
<dbReference type="GO" id="GO:0003723">
    <property type="term" value="F:RNA binding"/>
    <property type="evidence" value="ECO:0007005"/>
    <property type="project" value="UniProtKB"/>
</dbReference>
<dbReference type="GO" id="GO:0043565">
    <property type="term" value="F:sequence-specific DNA binding"/>
    <property type="evidence" value="ECO:0000314"/>
    <property type="project" value="UniProtKB"/>
</dbReference>
<dbReference type="GO" id="GO:0006264">
    <property type="term" value="P:mitochondrial DNA replication"/>
    <property type="evidence" value="ECO:0000304"/>
    <property type="project" value="Reactome"/>
</dbReference>
<dbReference type="GO" id="GO:0006390">
    <property type="term" value="P:mitochondrial transcription"/>
    <property type="evidence" value="ECO:0000314"/>
    <property type="project" value="UniProtKB"/>
</dbReference>
<dbReference type="GO" id="GO:0006391">
    <property type="term" value="P:transcription initiation at mitochondrial promoter"/>
    <property type="evidence" value="ECO:0000314"/>
    <property type="project" value="ComplexPortal"/>
</dbReference>
<dbReference type="DisProt" id="DP02703"/>
<dbReference type="FunFam" id="1.10.1320.10:FF:000002">
    <property type="entry name" value="DNA-directed RNA polymerase"/>
    <property type="match status" value="1"/>
</dbReference>
<dbReference type="FunFam" id="1.10.150.20:FF:000031">
    <property type="entry name" value="DNA-directed RNA polymerase"/>
    <property type="match status" value="1"/>
</dbReference>
<dbReference type="FunFam" id="1.10.287.280:FF:000001">
    <property type="entry name" value="DNA-directed RNA polymerase"/>
    <property type="match status" value="1"/>
</dbReference>
<dbReference type="FunFam" id="1.25.40.10:FF:001348">
    <property type="entry name" value="DNA-directed RNA polymerase, mitochondrial"/>
    <property type="match status" value="1"/>
</dbReference>
<dbReference type="Gene3D" id="1.10.287.280">
    <property type="match status" value="1"/>
</dbReference>
<dbReference type="Gene3D" id="1.10.150.20">
    <property type="entry name" value="5' to 3' exonuclease, C-terminal subdomain"/>
    <property type="match status" value="1"/>
</dbReference>
<dbReference type="Gene3D" id="1.10.1320.10">
    <property type="entry name" value="DNA-directed RNA polymerase, N-terminal domain"/>
    <property type="match status" value="1"/>
</dbReference>
<dbReference type="Gene3D" id="1.25.40.10">
    <property type="entry name" value="Tetratricopeptide repeat domain"/>
    <property type="match status" value="1"/>
</dbReference>
<dbReference type="InterPro" id="IPR046950">
    <property type="entry name" value="DNA-dir_Rpol_C_phage-type"/>
</dbReference>
<dbReference type="InterPro" id="IPR002092">
    <property type="entry name" value="DNA-dir_Rpol_phage-type"/>
</dbReference>
<dbReference type="InterPro" id="IPR043502">
    <property type="entry name" value="DNA/RNA_pol_sf"/>
</dbReference>
<dbReference type="InterPro" id="IPR037159">
    <property type="entry name" value="RNA_POL_N_sf"/>
</dbReference>
<dbReference type="InterPro" id="IPR029262">
    <property type="entry name" value="RPOL_N"/>
</dbReference>
<dbReference type="InterPro" id="IPR011990">
    <property type="entry name" value="TPR-like_helical_dom_sf"/>
</dbReference>
<dbReference type="PANTHER" id="PTHR10102">
    <property type="entry name" value="DNA-DIRECTED RNA POLYMERASE, MITOCHONDRIAL"/>
    <property type="match status" value="1"/>
</dbReference>
<dbReference type="PANTHER" id="PTHR10102:SF0">
    <property type="entry name" value="DNA-DIRECTED RNA POLYMERASE, MITOCHONDRIAL"/>
    <property type="match status" value="1"/>
</dbReference>
<dbReference type="Pfam" id="PF00940">
    <property type="entry name" value="RNA_pol"/>
    <property type="match status" value="1"/>
</dbReference>
<dbReference type="Pfam" id="PF14700">
    <property type="entry name" value="RPOL_N"/>
    <property type="match status" value="1"/>
</dbReference>
<dbReference type="SMART" id="SM01311">
    <property type="entry name" value="RPOL_N"/>
    <property type="match status" value="1"/>
</dbReference>
<dbReference type="SUPFAM" id="SSF56672">
    <property type="entry name" value="DNA/RNA polymerases"/>
    <property type="match status" value="1"/>
</dbReference>
<dbReference type="PROSITE" id="PS00900">
    <property type="entry name" value="RNA_POL_PHAGE_1"/>
    <property type="match status" value="1"/>
</dbReference>
<dbReference type="PROSITE" id="PS00489">
    <property type="entry name" value="RNA_POL_PHAGE_2"/>
    <property type="match status" value="1"/>
</dbReference>
<sequence length="1230" mass="138620">MSALCWGRGAAGLKRALRPCGRPGLPGKEGTAGGVCGPRRSSSASPQEQDQDRRKDWGHVELLEVLQARVRQLQAESVSEVVVNRVDVARLPECGSGDGSLQPPRKVQMGAKDATPVPCGRWAKILEKDKRTQQMRMQRLKAKLQMPFQSGEFKALTRRLQVEPRLLSKQMAGCLEDCTRQAPESPWEEQLARLLQEAPGKLSLDVEQAPSGQHSQAQLSGQQQRLLAFFKCCLLTDQLPLAHHLLVVHHGQRQKRKLLTLDMYNAVMLGWARQGAFKELVYVLFMVKDAGLTPDLLSYAAALQCMGRQDQDAGTIERCLEQMSQEGLKLQALFTAVLLSEEDRATVLKAVHKVKPTFSLPPQLPPPVNTSKLLRDVYAKDGRVSYPKLHLPLKTLQCLFEKQLHMELASRVCVVSVEKPTLPSKEVKHARKTLKTLRDQWEKALCRALRETKNRLEREVYEGRFSLYPFLCLLDEREVVRMLLQVLQALPAQGESFTTLARELSARTFSRHVVQRQRVSGQVQALQNHYRKYLCLLASDAEVPEPCLPRQYWEELGAPEALREQPWPLPVQMELGKLLAEMLVQATQMPCSLDKPHRSSRLVPVLYHVYSFRNVQQIGILKPHPAYVQLLEKAAEPTLTFEAVDVPMLCPPLPWTSPHSGAFLLSPTKLMRTVEGATQHQELLETCPPTALHGALDALTQLGNCAWRVNGRVLDLVLQLFQAKGCPQLGVPAPPSEAPQPPEAHLPHSAAPARKAELRRELAHCQKVAREMHSLRAEALYRLSLAQHLRDRVFWLPHNMDFRGRTYPCPPHFNHLGSDVARALLEFAQGRPLGPHGLDWLKIHLVNLTGLKKREPLRKRLAFAEEVMDDILDSADQPLTGRKWWMGAEEPWQTLACCMEVANAVRASDPAAYVSHLPVHQDGSCNGLQHYAALGRDSVGAASVNLEPSDVPQDVYSGVAAQVEVFRRQDAQRGMRVAQVLEGFITRKVVKQTVMTVVYGVTRYGGRLQIEKRLRELSDFPQEFVWEASHYLVRQVFKSLQEMFSGTRAIQHWLTESARLISHMGSVVEWVTPLGVPVIQPYRLDSKVKQIGGGIQSITYTHNGDISRKPNTRKQKNGFPPNFIHSLDSSHMMLTALHCYRKGLTFVSVHDCYWTHAADVSVMNQVCREQFVRLHSEPILQDLSRFLVKRFCSEPQKILEASQLKETLQAVPKPGAFDLEQVKRSTYFFS</sequence>
<organism>
    <name type="scientific">Homo sapiens</name>
    <name type="common">Human</name>
    <dbReference type="NCBI Taxonomy" id="9606"/>
    <lineage>
        <taxon>Eukaryota</taxon>
        <taxon>Metazoa</taxon>
        <taxon>Chordata</taxon>
        <taxon>Craniata</taxon>
        <taxon>Vertebrata</taxon>
        <taxon>Euteleostomi</taxon>
        <taxon>Mammalia</taxon>
        <taxon>Eutheria</taxon>
        <taxon>Euarchontoglires</taxon>
        <taxon>Primates</taxon>
        <taxon>Haplorrhini</taxon>
        <taxon>Catarrhini</taxon>
        <taxon>Hominidae</taxon>
        <taxon>Homo</taxon>
    </lineage>
</organism>
<feature type="transit peptide" description="Mitochondrion" evidence="2">
    <location>
        <begin position="1"/>
        <end position="41"/>
    </location>
</feature>
<feature type="chain" id="PRO_0000031068" description="DNA-directed RNA polymerase, mitochondrial">
    <location>
        <begin position="42"/>
        <end position="1230"/>
    </location>
</feature>
<feature type="region of interest" description="Disordered" evidence="5">
    <location>
        <begin position="18"/>
        <end position="55"/>
    </location>
</feature>
<feature type="region of interest" description="Disordered" evidence="5">
    <location>
        <begin position="95"/>
        <end position="115"/>
    </location>
</feature>
<feature type="region of interest" description="Disordered" evidence="5">
    <location>
        <begin position="731"/>
        <end position="750"/>
    </location>
</feature>
<feature type="region of interest" description="Mediates interaction with TEFM" evidence="8">
    <location>
        <begin position="802"/>
        <end position="1230"/>
    </location>
</feature>
<feature type="compositionally biased region" description="Pro residues" evidence="5">
    <location>
        <begin position="732"/>
        <end position="744"/>
    </location>
</feature>
<feature type="active site" evidence="1">
    <location>
        <position position="922"/>
    </location>
</feature>
<feature type="active site" evidence="1">
    <location>
        <position position="991"/>
    </location>
</feature>
<feature type="active site" evidence="1">
    <location>
        <position position="1151"/>
    </location>
</feature>
<feature type="sequence variant" id="VAR_086918" description="In COXPD55." evidence="13">
    <location>
        <begin position="149"/>
        <end position="1230"/>
    </location>
</feature>
<feature type="sequence variant" id="VAR_086919" description="In COXPD55; results in mild reduction of transcription of mitochondrial DNA in an in vitro assay; dbSNP:rs137994680." evidence="13">
    <original>H</original>
    <variation>D</variation>
    <location>
        <position position="250"/>
    </location>
</feature>
<feature type="sequence variant" id="VAR_019427" description="In dbSNP:rs2238549.">
    <original>E</original>
    <variation>A</variation>
    <location>
        <position position="555"/>
    </location>
</feature>
<feature type="sequence variant" id="VAR_086920" description="In COXPD55; when associated in cis with F-1193; dbSNP:rs41545023." evidence="13">
    <original>P</original>
    <variation>S</variation>
    <location>
        <position position="566"/>
    </location>
</feature>
<feature type="sequence variant" id="VAR_086921" description="In COXPD55; results in decreased transcription of mitochondrial DNA in vitro; reduced DNA primase activity; dbSNP:rs2144625053." evidence="13">
    <original>S</original>
    <variation>F</variation>
    <location>
        <position position="611"/>
    </location>
</feature>
<feature type="sequence variant" id="VAR_086922" description="In COXPD55; results in mild reduction of transcription of mitochondrial DNA in vitro; reduced DNA primase activity; dbSNP:rs748687181 and dbSNP:rs1362809473." evidence="13">
    <original>F</original>
    <variation>L</variation>
    <location>
        <position position="641"/>
    </location>
</feature>
<feature type="sequence variant" id="VAR_086923" description="In COXPD55; results in decreased transcription of mitochondrial DNA in vitro." evidence="13">
    <location>
        <begin position="742"/>
        <end position="747"/>
    </location>
</feature>
<feature type="sequence variant" id="VAR_086924" description="In COXPD55; uncertain significance; results in decreased transcription of mitochondrial DNA in vitro; dbSNP:rs201364510." evidence="13">
    <original>P</original>
    <variation>S</variation>
    <location>
        <position position="810"/>
    </location>
</feature>
<feature type="sequence variant" id="VAR_086925" description="In COXPD55; uncertain significance; results in decreased transcription of mitochondrial DNA in vitro; dbSNP:rs139383492." evidence="13">
    <original>D</original>
    <variation>N</variation>
    <location>
        <position position="870"/>
    </location>
</feature>
<feature type="sequence variant" id="VAR_086926" description="In COXPD55." evidence="13">
    <location>
        <begin position="925"/>
        <end position="1230"/>
    </location>
</feature>
<feature type="sequence variant" id="VAR_086927" description="In COXPD55; results in decreased transcription of mitochondrial DNA in vitro; dbSNP:rs745348188." evidence="13">
    <original>R</original>
    <variation>C</variation>
    <location>
        <position position="1013"/>
    </location>
</feature>
<feature type="sequence variant" id="VAR_086928" description="In COXPD55; when associated in cis with S-566; dbSNP:rs142850300." evidence="13">
    <original>S</original>
    <variation>F</variation>
    <location>
        <position position="1193"/>
    </location>
</feature>
<feature type="sequence conflict" description="In Ref. 1; AAB58255." evidence="14" ref="1">
    <original>L</original>
    <variation>F</variation>
    <location>
        <position position="399"/>
    </location>
</feature>
<feature type="sequence conflict" description="In Ref. 1; AAB58255." evidence="14" ref="1">
    <original>G</original>
    <variation>S</variation>
    <location>
        <position position="983"/>
    </location>
</feature>
<feature type="helix" evidence="18">
    <location>
        <begin position="221"/>
        <end position="236"/>
    </location>
</feature>
<feature type="helix" evidence="18">
    <location>
        <begin position="239"/>
        <end position="251"/>
    </location>
</feature>
<feature type="helix" evidence="18">
    <location>
        <begin position="253"/>
        <end position="256"/>
    </location>
</feature>
<feature type="helix" evidence="18">
    <location>
        <begin position="261"/>
        <end position="274"/>
    </location>
</feature>
<feature type="helix" evidence="18">
    <location>
        <begin position="277"/>
        <end position="289"/>
    </location>
</feature>
<feature type="helix" evidence="18">
    <location>
        <begin position="296"/>
        <end position="309"/>
    </location>
</feature>
<feature type="helix" evidence="18">
    <location>
        <begin position="313"/>
        <end position="325"/>
    </location>
</feature>
<feature type="helix" evidence="18">
    <location>
        <begin position="331"/>
        <end position="336"/>
    </location>
</feature>
<feature type="helix" evidence="18">
    <location>
        <begin position="341"/>
        <end position="351"/>
    </location>
</feature>
<feature type="helix" evidence="18">
    <location>
        <begin position="352"/>
        <end position="354"/>
    </location>
</feature>
<feature type="turn" evidence="18">
    <location>
        <begin position="372"/>
        <end position="374"/>
    </location>
</feature>
<feature type="helix" evidence="18">
    <location>
        <begin position="375"/>
        <end position="378"/>
    </location>
</feature>
<feature type="strand" evidence="22">
    <location>
        <begin position="380"/>
        <end position="382"/>
    </location>
</feature>
<feature type="strand" evidence="21">
    <location>
        <begin position="389"/>
        <end position="391"/>
    </location>
</feature>
<feature type="helix" evidence="18">
    <location>
        <begin position="393"/>
        <end position="409"/>
    </location>
</feature>
<feature type="strand" evidence="18">
    <location>
        <begin position="411"/>
        <end position="415"/>
    </location>
</feature>
<feature type="strand" evidence="20">
    <location>
        <begin position="424"/>
        <end position="426"/>
    </location>
</feature>
<feature type="helix" evidence="18">
    <location>
        <begin position="427"/>
        <end position="461"/>
    </location>
</feature>
<feature type="helix" evidence="18">
    <location>
        <begin position="469"/>
        <end position="472"/>
    </location>
</feature>
<feature type="helix" evidence="18">
    <location>
        <begin position="476"/>
        <end position="489"/>
    </location>
</feature>
<feature type="helix" evidence="18">
    <location>
        <begin position="497"/>
        <end position="519"/>
    </location>
</feature>
<feature type="helix" evidence="18">
    <location>
        <begin position="522"/>
        <end position="533"/>
    </location>
</feature>
<feature type="helix" evidence="18">
    <location>
        <begin position="534"/>
        <end position="536"/>
    </location>
</feature>
<feature type="strand" evidence="21">
    <location>
        <begin position="538"/>
        <end position="541"/>
    </location>
</feature>
<feature type="helix" evidence="18">
    <location>
        <begin position="549"/>
        <end position="557"/>
    </location>
</feature>
<feature type="helix" evidence="18">
    <location>
        <begin position="562"/>
        <end position="564"/>
    </location>
</feature>
<feature type="helix" evidence="18">
    <location>
        <begin position="569"/>
        <end position="586"/>
    </location>
</feature>
<feature type="strand" evidence="22">
    <location>
        <begin position="588"/>
        <end position="591"/>
    </location>
</feature>
<feature type="helix" evidence="22">
    <location>
        <begin position="598"/>
        <end position="600"/>
    </location>
</feature>
<feature type="strand" evidence="18">
    <location>
        <begin position="604"/>
        <end position="610"/>
    </location>
</feature>
<feature type="strand" evidence="19">
    <location>
        <begin position="613"/>
        <end position="616"/>
    </location>
</feature>
<feature type="strand" evidence="18">
    <location>
        <begin position="619"/>
        <end position="623"/>
    </location>
</feature>
<feature type="helix" evidence="18">
    <location>
        <begin position="625"/>
        <end position="634"/>
    </location>
</feature>
<feature type="strand" evidence="18">
    <location>
        <begin position="637"/>
        <end position="642"/>
    </location>
</feature>
<feature type="helix" evidence="18">
    <location>
        <begin position="643"/>
        <end position="645"/>
    </location>
</feature>
<feature type="strand" evidence="18">
    <location>
        <begin position="648"/>
        <end position="650"/>
    </location>
</feature>
<feature type="strand" evidence="18">
    <location>
        <begin position="653"/>
        <end position="657"/>
    </location>
</feature>
<feature type="strand" evidence="18">
    <location>
        <begin position="660"/>
        <end position="666"/>
    </location>
</feature>
<feature type="helix" evidence="18">
    <location>
        <begin position="677"/>
        <end position="685"/>
    </location>
</feature>
<feature type="helix" evidence="18">
    <location>
        <begin position="689"/>
        <end position="692"/>
    </location>
</feature>
<feature type="helix" evidence="18">
    <location>
        <begin position="693"/>
        <end position="703"/>
    </location>
</feature>
<feature type="strand" evidence="18">
    <location>
        <begin position="706"/>
        <end position="709"/>
    </location>
</feature>
<feature type="helix" evidence="18">
    <location>
        <begin position="711"/>
        <end position="721"/>
    </location>
</feature>
<feature type="turn" evidence="18">
    <location>
        <begin position="722"/>
        <end position="724"/>
    </location>
</feature>
<feature type="helix" evidence="18">
    <location>
        <begin position="727"/>
        <end position="729"/>
    </location>
</feature>
<feature type="helix" evidence="22">
    <location>
        <begin position="735"/>
        <end position="737"/>
    </location>
</feature>
<feature type="strand" evidence="19">
    <location>
        <begin position="748"/>
        <end position="750"/>
    </location>
</feature>
<feature type="turn" evidence="22">
    <location>
        <begin position="752"/>
        <end position="756"/>
    </location>
</feature>
<feature type="helix" evidence="18">
    <location>
        <begin position="772"/>
        <end position="789"/>
    </location>
</feature>
<feature type="strand" evidence="21">
    <location>
        <begin position="790"/>
        <end position="792"/>
    </location>
</feature>
<feature type="strand" evidence="18">
    <location>
        <begin position="798"/>
        <end position="800"/>
    </location>
</feature>
<feature type="strand" evidence="18">
    <location>
        <begin position="806"/>
        <end position="809"/>
    </location>
</feature>
<feature type="strand" evidence="18">
    <location>
        <begin position="811"/>
        <end position="813"/>
    </location>
</feature>
<feature type="turn" evidence="21">
    <location>
        <begin position="815"/>
        <end position="817"/>
    </location>
</feature>
<feature type="helix" evidence="18">
    <location>
        <begin position="819"/>
        <end position="823"/>
    </location>
</feature>
<feature type="strand" evidence="18">
    <location>
        <begin position="825"/>
        <end position="829"/>
    </location>
</feature>
<feature type="turn" evidence="18">
    <location>
        <begin position="834"/>
        <end position="836"/>
    </location>
</feature>
<feature type="helix" evidence="18">
    <location>
        <begin position="837"/>
        <end position="849"/>
    </location>
</feature>
<feature type="turn" evidence="21">
    <location>
        <begin position="850"/>
        <end position="852"/>
    </location>
</feature>
<feature type="strand" evidence="22">
    <location>
        <begin position="853"/>
        <end position="855"/>
    </location>
</feature>
<feature type="helix" evidence="18">
    <location>
        <begin position="857"/>
        <end position="876"/>
    </location>
</feature>
<feature type="turn" evidence="18">
    <location>
        <begin position="878"/>
        <end position="880"/>
    </location>
</feature>
<feature type="helix" evidence="18">
    <location>
        <begin position="884"/>
        <end position="887"/>
    </location>
</feature>
<feature type="strand" evidence="18">
    <location>
        <begin position="888"/>
        <end position="890"/>
    </location>
</feature>
<feature type="helix" evidence="18">
    <location>
        <begin position="891"/>
        <end position="905"/>
    </location>
</feature>
<feature type="strand" evidence="18">
    <location>
        <begin position="907"/>
        <end position="909"/>
    </location>
</feature>
<feature type="helix" evidence="18">
    <location>
        <begin position="910"/>
        <end position="912"/>
    </location>
</feature>
<feature type="strand" evidence="20">
    <location>
        <begin position="913"/>
        <end position="915"/>
    </location>
</feature>
<feature type="strand" evidence="18">
    <location>
        <begin position="918"/>
        <end position="922"/>
    </location>
</feature>
<feature type="helix" evidence="18">
    <location>
        <begin position="926"/>
        <end position="934"/>
    </location>
</feature>
<feature type="helix" evidence="18">
    <location>
        <begin position="938"/>
        <end position="943"/>
    </location>
</feature>
<feature type="helix" evidence="18">
    <location>
        <begin position="955"/>
        <end position="972"/>
    </location>
</feature>
<feature type="helix" evidence="18">
    <location>
        <begin position="976"/>
        <end position="980"/>
    </location>
</feature>
<feature type="turn" evidence="18">
    <location>
        <begin position="981"/>
        <end position="983"/>
    </location>
</feature>
<feature type="helix" evidence="18">
    <location>
        <begin position="987"/>
        <end position="999"/>
    </location>
</feature>
<feature type="strand" evidence="18">
    <location>
        <begin position="1002"/>
        <end position="1004"/>
    </location>
</feature>
<feature type="helix" evidence="18">
    <location>
        <begin position="1005"/>
        <end position="1015"/>
    </location>
</feature>
<feature type="strand" evidence="19">
    <location>
        <begin position="1018"/>
        <end position="1020"/>
    </location>
</feature>
<feature type="turn" evidence="18">
    <location>
        <begin position="1022"/>
        <end position="1024"/>
    </location>
</feature>
<feature type="helix" evidence="18">
    <location>
        <begin position="1025"/>
        <end position="1043"/>
    </location>
</feature>
<feature type="helix" evidence="18">
    <location>
        <begin position="1045"/>
        <end position="1063"/>
    </location>
</feature>
<feature type="strand" evidence="18">
    <location>
        <begin position="1069"/>
        <end position="1071"/>
    </location>
</feature>
<feature type="strand" evidence="21">
    <location>
        <begin position="1073"/>
        <end position="1075"/>
    </location>
</feature>
<feature type="strand" evidence="18">
    <location>
        <begin position="1077"/>
        <end position="1079"/>
    </location>
</feature>
<feature type="helix" evidence="18">
    <location>
        <begin position="1112"/>
        <end position="1141"/>
    </location>
</feature>
<feature type="strand" evidence="18">
    <location>
        <begin position="1147"/>
        <end position="1149"/>
    </location>
</feature>
<feature type="strand" evidence="18">
    <location>
        <begin position="1152"/>
        <end position="1156"/>
    </location>
</feature>
<feature type="helix" evidence="18">
    <location>
        <begin position="1157"/>
        <end position="1159"/>
    </location>
</feature>
<feature type="helix" evidence="18">
    <location>
        <begin position="1160"/>
        <end position="1176"/>
    </location>
</feature>
<feature type="helix" evidence="18">
    <location>
        <begin position="1179"/>
        <end position="1191"/>
    </location>
</feature>
<feature type="strand" evidence="22">
    <location>
        <begin position="1195"/>
        <end position="1197"/>
    </location>
</feature>
<feature type="helix" evidence="18">
    <location>
        <begin position="1198"/>
        <end position="1209"/>
    </location>
</feature>
<feature type="helix" evidence="18">
    <location>
        <begin position="1219"/>
        <end position="1224"/>
    </location>
</feature>
<feature type="strand" evidence="22">
    <location>
        <begin position="1226"/>
        <end position="1228"/>
    </location>
</feature>
<gene>
    <name evidence="15" type="primary">POLRMT</name>
</gene>
<proteinExistence type="evidence at protein level"/>